<sequence length="355" mass="36946">MNQPKSAPNSTDSAQGLSYRDAGVDIDAGDALVDAIKPFAKKTMRDGVLGGIGGFGALFEVPKKYKEPVLVSGTDGVGTKLRLAFQLNKHDTVGQDLVAMSVNDILVQGAEPLFFLDYFACGKLDVGTAATVVKGIAHGCELSGCALIGGETAEMPGMYPDGEYDLAGFAVGAVEKSKIIDGSTIAPGDVVLGLASSGIHSNGFSLVRKIIERAQPDLNADFDGRSLADALMAPTHIYVKPLLALMQQIAVKGMAHITGGGLVENIPRVLREGLTAELDHRGWPLPPLFSWLQKHGGVADAEMHRVFNCGIGMAVVVSAADADAAIGLLSAAGEQVWKIGVIRESAAGEAQTVVV</sequence>
<feature type="chain" id="PRO_1000193006" description="Phosphoribosylformylglycinamidine cyclo-ligase">
    <location>
        <begin position="1"/>
        <end position="355"/>
    </location>
</feature>
<keyword id="KW-0067">ATP-binding</keyword>
<keyword id="KW-0963">Cytoplasm</keyword>
<keyword id="KW-0436">Ligase</keyword>
<keyword id="KW-0547">Nucleotide-binding</keyword>
<keyword id="KW-0658">Purine biosynthesis</keyword>
<proteinExistence type="inferred from homology"/>
<comment type="catalytic activity">
    <reaction evidence="1">
        <text>2-formamido-N(1)-(5-O-phospho-beta-D-ribosyl)acetamidine + ATP = 5-amino-1-(5-phospho-beta-D-ribosyl)imidazole + ADP + phosphate + H(+)</text>
        <dbReference type="Rhea" id="RHEA:23032"/>
        <dbReference type="ChEBI" id="CHEBI:15378"/>
        <dbReference type="ChEBI" id="CHEBI:30616"/>
        <dbReference type="ChEBI" id="CHEBI:43474"/>
        <dbReference type="ChEBI" id="CHEBI:137981"/>
        <dbReference type="ChEBI" id="CHEBI:147287"/>
        <dbReference type="ChEBI" id="CHEBI:456216"/>
        <dbReference type="EC" id="6.3.3.1"/>
    </reaction>
</comment>
<comment type="pathway">
    <text evidence="1">Purine metabolism; IMP biosynthesis via de novo pathway; 5-amino-1-(5-phospho-D-ribosyl)imidazole from N(2)-formyl-N(1)-(5-phospho-D-ribosyl)glycinamide: step 2/2.</text>
</comment>
<comment type="subcellular location">
    <subcellularLocation>
        <location evidence="1">Cytoplasm</location>
    </subcellularLocation>
</comment>
<comment type="similarity">
    <text evidence="1">Belongs to the AIR synthase family.</text>
</comment>
<name>PUR5_PARPJ</name>
<gene>
    <name evidence="1" type="primary">purM</name>
    <name type="ordered locus">Bphyt_0748</name>
</gene>
<protein>
    <recommendedName>
        <fullName evidence="1">Phosphoribosylformylglycinamidine cyclo-ligase</fullName>
        <ecNumber evidence="1">6.3.3.1</ecNumber>
    </recommendedName>
    <alternativeName>
        <fullName evidence="1">AIR synthase</fullName>
    </alternativeName>
    <alternativeName>
        <fullName evidence="1">AIRS</fullName>
    </alternativeName>
    <alternativeName>
        <fullName evidence="1">Phosphoribosyl-aminoimidazole synthetase</fullName>
    </alternativeName>
</protein>
<evidence type="ECO:0000255" key="1">
    <source>
        <dbReference type="HAMAP-Rule" id="MF_00741"/>
    </source>
</evidence>
<reference key="1">
    <citation type="journal article" date="2011" name="J. Bacteriol.">
        <title>Complete genome sequence of the plant growth-promoting endophyte Burkholderia phytofirmans strain PsJN.</title>
        <authorList>
            <person name="Weilharter A."/>
            <person name="Mitter B."/>
            <person name="Shin M.V."/>
            <person name="Chain P.S."/>
            <person name="Nowak J."/>
            <person name="Sessitsch A."/>
        </authorList>
    </citation>
    <scope>NUCLEOTIDE SEQUENCE [LARGE SCALE GENOMIC DNA]</scope>
    <source>
        <strain>DSM 17436 / LMG 22146 / PsJN</strain>
    </source>
</reference>
<dbReference type="EC" id="6.3.3.1" evidence="1"/>
<dbReference type="EMBL" id="CP001052">
    <property type="protein sequence ID" value="ACD15172.1"/>
    <property type="molecule type" value="Genomic_DNA"/>
</dbReference>
<dbReference type="RefSeq" id="WP_012431808.1">
    <property type="nucleotide sequence ID" value="NC_010681.1"/>
</dbReference>
<dbReference type="SMR" id="B2T067"/>
<dbReference type="STRING" id="398527.Bphyt_0748"/>
<dbReference type="GeneID" id="97305690"/>
<dbReference type="KEGG" id="bpy:Bphyt_0748"/>
<dbReference type="eggNOG" id="COG0150">
    <property type="taxonomic scope" value="Bacteria"/>
</dbReference>
<dbReference type="HOGENOM" id="CLU_047116_0_0_4"/>
<dbReference type="OrthoDB" id="9777881at2"/>
<dbReference type="UniPathway" id="UPA00074">
    <property type="reaction ID" value="UER00129"/>
</dbReference>
<dbReference type="Proteomes" id="UP000001739">
    <property type="component" value="Chromosome 1"/>
</dbReference>
<dbReference type="GO" id="GO:0005829">
    <property type="term" value="C:cytosol"/>
    <property type="evidence" value="ECO:0007669"/>
    <property type="project" value="TreeGrafter"/>
</dbReference>
<dbReference type="GO" id="GO:0005524">
    <property type="term" value="F:ATP binding"/>
    <property type="evidence" value="ECO:0007669"/>
    <property type="project" value="UniProtKB-KW"/>
</dbReference>
<dbReference type="GO" id="GO:0004637">
    <property type="term" value="F:phosphoribosylamine-glycine ligase activity"/>
    <property type="evidence" value="ECO:0007669"/>
    <property type="project" value="TreeGrafter"/>
</dbReference>
<dbReference type="GO" id="GO:0004641">
    <property type="term" value="F:phosphoribosylformylglycinamidine cyclo-ligase activity"/>
    <property type="evidence" value="ECO:0007669"/>
    <property type="project" value="UniProtKB-UniRule"/>
</dbReference>
<dbReference type="GO" id="GO:0006189">
    <property type="term" value="P:'de novo' IMP biosynthetic process"/>
    <property type="evidence" value="ECO:0007669"/>
    <property type="project" value="UniProtKB-UniRule"/>
</dbReference>
<dbReference type="GO" id="GO:0046084">
    <property type="term" value="P:adenine biosynthetic process"/>
    <property type="evidence" value="ECO:0007669"/>
    <property type="project" value="TreeGrafter"/>
</dbReference>
<dbReference type="CDD" id="cd02196">
    <property type="entry name" value="PurM"/>
    <property type="match status" value="1"/>
</dbReference>
<dbReference type="FunFam" id="3.30.1330.10:FF:000001">
    <property type="entry name" value="Phosphoribosylformylglycinamidine cyclo-ligase"/>
    <property type="match status" value="1"/>
</dbReference>
<dbReference type="FunFam" id="3.90.650.10:FF:000001">
    <property type="entry name" value="Phosphoribosylformylglycinamidine cyclo-ligase"/>
    <property type="match status" value="1"/>
</dbReference>
<dbReference type="Gene3D" id="3.90.650.10">
    <property type="entry name" value="PurM-like C-terminal domain"/>
    <property type="match status" value="1"/>
</dbReference>
<dbReference type="Gene3D" id="3.30.1330.10">
    <property type="entry name" value="PurM-like, N-terminal domain"/>
    <property type="match status" value="1"/>
</dbReference>
<dbReference type="HAMAP" id="MF_00741">
    <property type="entry name" value="AIRS"/>
    <property type="match status" value="1"/>
</dbReference>
<dbReference type="InterPro" id="IPR010918">
    <property type="entry name" value="PurM-like_C_dom"/>
</dbReference>
<dbReference type="InterPro" id="IPR036676">
    <property type="entry name" value="PurM-like_C_sf"/>
</dbReference>
<dbReference type="InterPro" id="IPR016188">
    <property type="entry name" value="PurM-like_N"/>
</dbReference>
<dbReference type="InterPro" id="IPR036921">
    <property type="entry name" value="PurM-like_N_sf"/>
</dbReference>
<dbReference type="InterPro" id="IPR004733">
    <property type="entry name" value="PurM_cligase"/>
</dbReference>
<dbReference type="NCBIfam" id="TIGR00878">
    <property type="entry name" value="purM"/>
    <property type="match status" value="1"/>
</dbReference>
<dbReference type="PANTHER" id="PTHR10520:SF12">
    <property type="entry name" value="TRIFUNCTIONAL PURINE BIOSYNTHETIC PROTEIN ADENOSINE-3"/>
    <property type="match status" value="1"/>
</dbReference>
<dbReference type="PANTHER" id="PTHR10520">
    <property type="entry name" value="TRIFUNCTIONAL PURINE BIOSYNTHETIC PROTEIN ADENOSINE-3-RELATED"/>
    <property type="match status" value="1"/>
</dbReference>
<dbReference type="Pfam" id="PF00586">
    <property type="entry name" value="AIRS"/>
    <property type="match status" value="1"/>
</dbReference>
<dbReference type="Pfam" id="PF02769">
    <property type="entry name" value="AIRS_C"/>
    <property type="match status" value="1"/>
</dbReference>
<dbReference type="SUPFAM" id="SSF56042">
    <property type="entry name" value="PurM C-terminal domain-like"/>
    <property type="match status" value="1"/>
</dbReference>
<dbReference type="SUPFAM" id="SSF55326">
    <property type="entry name" value="PurM N-terminal domain-like"/>
    <property type="match status" value="1"/>
</dbReference>
<organism>
    <name type="scientific">Paraburkholderia phytofirmans (strain DSM 17436 / LMG 22146 / PsJN)</name>
    <name type="common">Burkholderia phytofirmans</name>
    <dbReference type="NCBI Taxonomy" id="398527"/>
    <lineage>
        <taxon>Bacteria</taxon>
        <taxon>Pseudomonadati</taxon>
        <taxon>Pseudomonadota</taxon>
        <taxon>Betaproteobacteria</taxon>
        <taxon>Burkholderiales</taxon>
        <taxon>Burkholderiaceae</taxon>
        <taxon>Paraburkholderia</taxon>
    </lineage>
</organism>
<accession>B2T067</accession>